<sequence>MRKIIHVDMDCFFAAVEMRDNPALRDVPIAIGGSRVKRGVISTANYPARKFGVRSAMPTAMALKLCPHLILLPGRFDAYKEASVRIQEIFSRYTSLIEPLSLDEAYLDVTDSLHCHGSATLMAQEIRQTISDELNLTASAGIAPVKFLAKIASDLNKPNGQYVITPDEVPHFLKTLPLSKIPGVGKVSAAKLENLGLRTCEDVQKSDLAMLLKRFGKFGRVLWERSQGIDERSINNERLRKSVGVERTLADDIHDWSDCETIITEQLYPELERRLAKVKPDLLIARQGVKLKFNDFQQTTQEHVWPKLNKDDLIATAKKTWQERRAGRGVRLVGLHVTLLDPQLERQLVLGL</sequence>
<proteinExistence type="inferred from homology"/>
<dbReference type="EC" id="2.7.7.7" evidence="1"/>
<dbReference type="EMBL" id="CP000653">
    <property type="protein sequence ID" value="ABP59448.1"/>
    <property type="molecule type" value="Genomic_DNA"/>
</dbReference>
<dbReference type="RefSeq" id="WP_012016169.1">
    <property type="nucleotide sequence ID" value="NC_009436.1"/>
</dbReference>
<dbReference type="SMR" id="A4W6W8"/>
<dbReference type="STRING" id="399742.Ent638_0762"/>
<dbReference type="KEGG" id="ent:Ent638_0762"/>
<dbReference type="eggNOG" id="COG0389">
    <property type="taxonomic scope" value="Bacteria"/>
</dbReference>
<dbReference type="HOGENOM" id="CLU_012348_1_2_6"/>
<dbReference type="OrthoDB" id="9808813at2"/>
<dbReference type="Proteomes" id="UP000000230">
    <property type="component" value="Chromosome"/>
</dbReference>
<dbReference type="GO" id="GO:0005829">
    <property type="term" value="C:cytosol"/>
    <property type="evidence" value="ECO:0007669"/>
    <property type="project" value="TreeGrafter"/>
</dbReference>
<dbReference type="GO" id="GO:0003684">
    <property type="term" value="F:damaged DNA binding"/>
    <property type="evidence" value="ECO:0007669"/>
    <property type="project" value="InterPro"/>
</dbReference>
<dbReference type="GO" id="GO:0003887">
    <property type="term" value="F:DNA-directed DNA polymerase activity"/>
    <property type="evidence" value="ECO:0007669"/>
    <property type="project" value="UniProtKB-UniRule"/>
</dbReference>
<dbReference type="GO" id="GO:0000287">
    <property type="term" value="F:magnesium ion binding"/>
    <property type="evidence" value="ECO:0007669"/>
    <property type="project" value="UniProtKB-UniRule"/>
</dbReference>
<dbReference type="GO" id="GO:0006261">
    <property type="term" value="P:DNA-templated DNA replication"/>
    <property type="evidence" value="ECO:0007669"/>
    <property type="project" value="UniProtKB-UniRule"/>
</dbReference>
<dbReference type="GO" id="GO:0042276">
    <property type="term" value="P:error-prone translesion synthesis"/>
    <property type="evidence" value="ECO:0007669"/>
    <property type="project" value="TreeGrafter"/>
</dbReference>
<dbReference type="GO" id="GO:0009432">
    <property type="term" value="P:SOS response"/>
    <property type="evidence" value="ECO:0007669"/>
    <property type="project" value="TreeGrafter"/>
</dbReference>
<dbReference type="CDD" id="cd03586">
    <property type="entry name" value="PolY_Pol_IV_kappa"/>
    <property type="match status" value="1"/>
</dbReference>
<dbReference type="FunFam" id="1.10.150.20:FF:000019">
    <property type="entry name" value="DNA polymerase IV"/>
    <property type="match status" value="1"/>
</dbReference>
<dbReference type="FunFam" id="3.30.1490.100:FF:000002">
    <property type="entry name" value="DNA polymerase IV"/>
    <property type="match status" value="1"/>
</dbReference>
<dbReference type="FunFam" id="3.30.70.270:FF:000002">
    <property type="entry name" value="DNA polymerase IV"/>
    <property type="match status" value="1"/>
</dbReference>
<dbReference type="FunFam" id="3.40.1170.60:FF:000001">
    <property type="entry name" value="DNA polymerase IV"/>
    <property type="match status" value="1"/>
</dbReference>
<dbReference type="Gene3D" id="3.30.70.270">
    <property type="match status" value="1"/>
</dbReference>
<dbReference type="Gene3D" id="3.40.1170.60">
    <property type="match status" value="1"/>
</dbReference>
<dbReference type="Gene3D" id="1.10.150.20">
    <property type="entry name" value="5' to 3' exonuclease, C-terminal subdomain"/>
    <property type="match status" value="1"/>
</dbReference>
<dbReference type="Gene3D" id="3.30.1490.100">
    <property type="entry name" value="DNA polymerase, Y-family, little finger domain"/>
    <property type="match status" value="1"/>
</dbReference>
<dbReference type="HAMAP" id="MF_01113">
    <property type="entry name" value="DNApol_IV"/>
    <property type="match status" value="1"/>
</dbReference>
<dbReference type="InterPro" id="IPR043502">
    <property type="entry name" value="DNA/RNA_pol_sf"/>
</dbReference>
<dbReference type="InterPro" id="IPR036775">
    <property type="entry name" value="DNA_pol_Y-fam_lit_finger_sf"/>
</dbReference>
<dbReference type="InterPro" id="IPR017961">
    <property type="entry name" value="DNA_pol_Y-fam_little_finger"/>
</dbReference>
<dbReference type="InterPro" id="IPR050116">
    <property type="entry name" value="DNA_polymerase-Y"/>
</dbReference>
<dbReference type="InterPro" id="IPR022880">
    <property type="entry name" value="DNApol_IV"/>
</dbReference>
<dbReference type="InterPro" id="IPR053848">
    <property type="entry name" value="IMS_HHH_1"/>
</dbReference>
<dbReference type="InterPro" id="IPR043128">
    <property type="entry name" value="Rev_trsase/Diguanyl_cyclase"/>
</dbReference>
<dbReference type="InterPro" id="IPR001126">
    <property type="entry name" value="UmuC"/>
</dbReference>
<dbReference type="NCBIfam" id="NF002677">
    <property type="entry name" value="PRK02406.1"/>
    <property type="match status" value="1"/>
</dbReference>
<dbReference type="PANTHER" id="PTHR11076:SF33">
    <property type="entry name" value="DNA POLYMERASE KAPPA"/>
    <property type="match status" value="1"/>
</dbReference>
<dbReference type="PANTHER" id="PTHR11076">
    <property type="entry name" value="DNA REPAIR POLYMERASE UMUC / TRANSFERASE FAMILY MEMBER"/>
    <property type="match status" value="1"/>
</dbReference>
<dbReference type="Pfam" id="PF00817">
    <property type="entry name" value="IMS"/>
    <property type="match status" value="1"/>
</dbReference>
<dbReference type="Pfam" id="PF11799">
    <property type="entry name" value="IMS_C"/>
    <property type="match status" value="1"/>
</dbReference>
<dbReference type="Pfam" id="PF21999">
    <property type="entry name" value="IMS_HHH_1"/>
    <property type="match status" value="1"/>
</dbReference>
<dbReference type="SUPFAM" id="SSF56672">
    <property type="entry name" value="DNA/RNA polymerases"/>
    <property type="match status" value="1"/>
</dbReference>
<dbReference type="SUPFAM" id="SSF100879">
    <property type="entry name" value="Lesion bypass DNA polymerase (Y-family), little finger domain"/>
    <property type="match status" value="1"/>
</dbReference>
<dbReference type="PROSITE" id="PS50173">
    <property type="entry name" value="UMUC"/>
    <property type="match status" value="1"/>
</dbReference>
<gene>
    <name evidence="1" type="primary">dinB</name>
    <name type="ordered locus">Ent638_0762</name>
</gene>
<organism>
    <name type="scientific">Enterobacter sp. (strain 638)</name>
    <dbReference type="NCBI Taxonomy" id="399742"/>
    <lineage>
        <taxon>Bacteria</taxon>
        <taxon>Pseudomonadati</taxon>
        <taxon>Pseudomonadota</taxon>
        <taxon>Gammaproteobacteria</taxon>
        <taxon>Enterobacterales</taxon>
        <taxon>Enterobacteriaceae</taxon>
        <taxon>Enterobacter</taxon>
    </lineage>
</organism>
<protein>
    <recommendedName>
        <fullName evidence="1">DNA polymerase IV</fullName>
        <shortName evidence="1">Pol IV</shortName>
        <ecNumber evidence="1">2.7.7.7</ecNumber>
    </recommendedName>
</protein>
<keyword id="KW-0963">Cytoplasm</keyword>
<keyword id="KW-0227">DNA damage</keyword>
<keyword id="KW-0234">DNA repair</keyword>
<keyword id="KW-0235">DNA replication</keyword>
<keyword id="KW-0238">DNA-binding</keyword>
<keyword id="KW-0239">DNA-directed DNA polymerase</keyword>
<keyword id="KW-0460">Magnesium</keyword>
<keyword id="KW-0479">Metal-binding</keyword>
<keyword id="KW-0515">Mutator protein</keyword>
<keyword id="KW-0548">Nucleotidyltransferase</keyword>
<keyword id="KW-0808">Transferase</keyword>
<accession>A4W6W8</accession>
<name>DPO4_ENT38</name>
<evidence type="ECO:0000255" key="1">
    <source>
        <dbReference type="HAMAP-Rule" id="MF_01113"/>
    </source>
</evidence>
<reference key="1">
    <citation type="journal article" date="2010" name="PLoS Genet.">
        <title>Genome sequence of the plant growth promoting endophytic bacterium Enterobacter sp. 638.</title>
        <authorList>
            <person name="Taghavi S."/>
            <person name="van der Lelie D."/>
            <person name="Hoffman A."/>
            <person name="Zhang Y.B."/>
            <person name="Walla M.D."/>
            <person name="Vangronsveld J."/>
            <person name="Newman L."/>
            <person name="Monchy S."/>
        </authorList>
    </citation>
    <scope>NUCLEOTIDE SEQUENCE [LARGE SCALE GENOMIC DNA]</scope>
    <source>
        <strain>638</strain>
    </source>
</reference>
<feature type="chain" id="PRO_1000084894" description="DNA polymerase IV">
    <location>
        <begin position="1"/>
        <end position="352"/>
    </location>
</feature>
<feature type="domain" description="UmuC" evidence="1">
    <location>
        <begin position="4"/>
        <end position="185"/>
    </location>
</feature>
<feature type="active site" evidence="1">
    <location>
        <position position="104"/>
    </location>
</feature>
<feature type="binding site" evidence="1">
    <location>
        <position position="8"/>
    </location>
    <ligand>
        <name>Mg(2+)</name>
        <dbReference type="ChEBI" id="CHEBI:18420"/>
    </ligand>
</feature>
<feature type="binding site" evidence="1">
    <location>
        <position position="103"/>
    </location>
    <ligand>
        <name>Mg(2+)</name>
        <dbReference type="ChEBI" id="CHEBI:18420"/>
    </ligand>
</feature>
<feature type="site" description="Substrate discrimination" evidence="1">
    <location>
        <position position="13"/>
    </location>
</feature>
<comment type="function">
    <text evidence="1">Poorly processive, error-prone DNA polymerase involved in untargeted mutagenesis. Copies undamaged DNA at stalled replication forks, which arise in vivo from mismatched or misaligned primer ends. These misaligned primers can be extended by PolIV. Exhibits no 3'-5' exonuclease (proofreading) activity. May be involved in translesional synthesis, in conjunction with the beta clamp from PolIII.</text>
</comment>
<comment type="catalytic activity">
    <reaction evidence="1">
        <text>DNA(n) + a 2'-deoxyribonucleoside 5'-triphosphate = DNA(n+1) + diphosphate</text>
        <dbReference type="Rhea" id="RHEA:22508"/>
        <dbReference type="Rhea" id="RHEA-COMP:17339"/>
        <dbReference type="Rhea" id="RHEA-COMP:17340"/>
        <dbReference type="ChEBI" id="CHEBI:33019"/>
        <dbReference type="ChEBI" id="CHEBI:61560"/>
        <dbReference type="ChEBI" id="CHEBI:173112"/>
        <dbReference type="EC" id="2.7.7.7"/>
    </reaction>
</comment>
<comment type="cofactor">
    <cofactor evidence="1">
        <name>Mg(2+)</name>
        <dbReference type="ChEBI" id="CHEBI:18420"/>
    </cofactor>
    <text evidence="1">Binds 2 magnesium ions per subunit.</text>
</comment>
<comment type="subunit">
    <text evidence="1">Monomer.</text>
</comment>
<comment type="subcellular location">
    <subcellularLocation>
        <location evidence="1">Cytoplasm</location>
    </subcellularLocation>
</comment>
<comment type="similarity">
    <text evidence="1">Belongs to the DNA polymerase type-Y family.</text>
</comment>